<reference key="1">
    <citation type="journal article" date="1997" name="Proc. Natl. Acad. Sci. U.S.A.">
        <title>Sequence of a 189-kb segment of the chromosome of Rhodobacter capsulatus SB1003.</title>
        <authorList>
            <person name="Vlcek C."/>
            <person name="Paces V."/>
            <person name="Maltsev N."/>
            <person name="Paces J."/>
            <person name="Haselkorn R."/>
            <person name="Fonstein M."/>
        </authorList>
    </citation>
    <scope>NUCLEOTIDE SEQUENCE [GENOMIC DNA]</scope>
    <source>
        <strain>ATCC BAA-309 / NBRC 16581 / SB1003</strain>
    </source>
</reference>
<reference key="2">
    <citation type="journal article" date="2010" name="J. Bacteriol.">
        <title>Complete genome sequence of the photosynthetic purple nonsulfur bacterium Rhodobacter capsulatus SB 1003.</title>
        <authorList>
            <person name="Strnad H."/>
            <person name="Lapidus A."/>
            <person name="Paces J."/>
            <person name="Ulbrich P."/>
            <person name="Vlcek C."/>
            <person name="Paces V."/>
            <person name="Haselkorn R."/>
        </authorList>
    </citation>
    <scope>NUCLEOTIDE SEQUENCE [LARGE SCALE GENOMIC DNA]</scope>
    <source>
        <strain>ATCC BAA-309 / NBRC 16581 / SB1003</strain>
    </source>
</reference>
<accession>D5AV20</accession>
<accession>O68087</accession>
<accession>Q52679</accession>
<evidence type="ECO:0000250" key="1"/>
<evidence type="ECO:0000305" key="2"/>
<protein>
    <recommendedName>
        <fullName>Nicotinate-nucleotide--dimethylbenzimidazole phosphoribosyltransferase</fullName>
        <shortName>NN:DBI PRT</shortName>
        <ecNumber>2.4.2.21</ecNumber>
    </recommendedName>
    <alternativeName>
        <fullName>N(1)-alpha-phosphoribosyltransferase</fullName>
    </alternativeName>
</protein>
<comment type="function">
    <text evidence="1">Catalyzes the synthesis of alpha-ribazole-5'-phosphate from nicotinate mononucleotide (NAMN) and 5,6-dimethylbenzimidazole (DMB).</text>
</comment>
<comment type="catalytic activity">
    <reaction>
        <text>5,6-dimethylbenzimidazole + nicotinate beta-D-ribonucleotide = alpha-ribazole 5'-phosphate + nicotinate + H(+)</text>
        <dbReference type="Rhea" id="RHEA:11196"/>
        <dbReference type="ChEBI" id="CHEBI:15378"/>
        <dbReference type="ChEBI" id="CHEBI:15890"/>
        <dbReference type="ChEBI" id="CHEBI:32544"/>
        <dbReference type="ChEBI" id="CHEBI:57502"/>
        <dbReference type="ChEBI" id="CHEBI:57918"/>
        <dbReference type="EC" id="2.4.2.21"/>
    </reaction>
</comment>
<comment type="pathway">
    <text>Nucleoside biosynthesis; alpha-ribazole biosynthesis; alpha-ribazole from 5,6-dimethylbenzimidazole: step 1/2.</text>
</comment>
<comment type="similarity">
    <text evidence="2">Belongs to the CobT family.</text>
</comment>
<dbReference type="EC" id="2.4.2.21"/>
<dbReference type="EMBL" id="AF010496">
    <property type="protein sequence ID" value="AAC16173.1"/>
    <property type="molecule type" value="Genomic_DNA"/>
</dbReference>
<dbReference type="EMBL" id="CP001312">
    <property type="protein sequence ID" value="ADE85802.1"/>
    <property type="molecule type" value="Genomic_DNA"/>
</dbReference>
<dbReference type="PIR" id="T03520">
    <property type="entry name" value="T03520"/>
</dbReference>
<dbReference type="RefSeq" id="WP_013067781.1">
    <property type="nucleotide sequence ID" value="NC_014034.1"/>
</dbReference>
<dbReference type="SMR" id="D5AV20"/>
<dbReference type="STRING" id="272942.RCAP_rcc02058"/>
<dbReference type="GeneID" id="31490920"/>
<dbReference type="KEGG" id="rcp:RCAP_rcc02058"/>
<dbReference type="eggNOG" id="COG2038">
    <property type="taxonomic scope" value="Bacteria"/>
</dbReference>
<dbReference type="HOGENOM" id="CLU_002982_0_1_5"/>
<dbReference type="OrthoDB" id="9781491at2"/>
<dbReference type="UniPathway" id="UPA00061">
    <property type="reaction ID" value="UER00516"/>
</dbReference>
<dbReference type="Proteomes" id="UP000002361">
    <property type="component" value="Chromosome"/>
</dbReference>
<dbReference type="GO" id="GO:0008939">
    <property type="term" value="F:nicotinate-nucleotide-dimethylbenzimidazole phosphoribosyltransferase activity"/>
    <property type="evidence" value="ECO:0007669"/>
    <property type="project" value="UniProtKB-UniRule"/>
</dbReference>
<dbReference type="GO" id="GO:0009236">
    <property type="term" value="P:cobalamin biosynthetic process"/>
    <property type="evidence" value="ECO:0007669"/>
    <property type="project" value="UniProtKB-KW"/>
</dbReference>
<dbReference type="CDD" id="cd02439">
    <property type="entry name" value="DMB-PRT_CobT"/>
    <property type="match status" value="1"/>
</dbReference>
<dbReference type="Gene3D" id="1.10.1610.10">
    <property type="match status" value="1"/>
</dbReference>
<dbReference type="Gene3D" id="3.40.50.10210">
    <property type="match status" value="1"/>
</dbReference>
<dbReference type="HAMAP" id="MF_00230">
    <property type="entry name" value="CobT"/>
    <property type="match status" value="1"/>
</dbReference>
<dbReference type="InterPro" id="IPR003200">
    <property type="entry name" value="Nict_dMeBzImd_PRibTrfase"/>
</dbReference>
<dbReference type="InterPro" id="IPR017846">
    <property type="entry name" value="Nict_dMeBzImd_PRibTrfase_bact"/>
</dbReference>
<dbReference type="InterPro" id="IPR023195">
    <property type="entry name" value="Nict_dMeBzImd_PRibTrfase_N"/>
</dbReference>
<dbReference type="InterPro" id="IPR036087">
    <property type="entry name" value="Nict_dMeBzImd_PRibTrfase_sf"/>
</dbReference>
<dbReference type="NCBIfam" id="TIGR03160">
    <property type="entry name" value="cobT_DBIPRT"/>
    <property type="match status" value="1"/>
</dbReference>
<dbReference type="NCBIfam" id="NF000996">
    <property type="entry name" value="PRK00105.1"/>
    <property type="match status" value="1"/>
</dbReference>
<dbReference type="PANTHER" id="PTHR43463">
    <property type="entry name" value="NICOTINATE-NUCLEOTIDE--DIMETHYLBENZIMIDAZOLE PHOSPHORIBOSYLTRANSFERASE"/>
    <property type="match status" value="1"/>
</dbReference>
<dbReference type="PANTHER" id="PTHR43463:SF1">
    <property type="entry name" value="NICOTINATE-NUCLEOTIDE--DIMETHYLBENZIMIDAZOLE PHOSPHORIBOSYLTRANSFERASE"/>
    <property type="match status" value="1"/>
</dbReference>
<dbReference type="Pfam" id="PF02277">
    <property type="entry name" value="DBI_PRT"/>
    <property type="match status" value="1"/>
</dbReference>
<dbReference type="SUPFAM" id="SSF52733">
    <property type="entry name" value="Nicotinate mononucleotide:5,6-dimethylbenzimidazole phosphoribosyltransferase (CobT)"/>
    <property type="match status" value="1"/>
</dbReference>
<gene>
    <name type="primary">cobT</name>
    <name type="synonym">cobU</name>
    <name type="ordered locus">RCAP_rcc02058</name>
</gene>
<keyword id="KW-0169">Cobalamin biosynthesis</keyword>
<keyword id="KW-0328">Glycosyltransferase</keyword>
<keyword id="KW-1185">Reference proteome</keyword>
<keyword id="KW-0808">Transferase</keyword>
<proteinExistence type="inferred from homology"/>
<name>COBT_RHOCB</name>
<organism>
    <name type="scientific">Rhodobacter capsulatus (strain ATCC BAA-309 / NBRC 16581 / SB1003)</name>
    <dbReference type="NCBI Taxonomy" id="272942"/>
    <lineage>
        <taxon>Bacteria</taxon>
        <taxon>Pseudomonadati</taxon>
        <taxon>Pseudomonadota</taxon>
        <taxon>Alphaproteobacteria</taxon>
        <taxon>Rhodobacterales</taxon>
        <taxon>Rhodobacter group</taxon>
        <taxon>Rhodobacter</taxon>
    </lineage>
</organism>
<feature type="chain" id="PRO_0000409931" description="Nicotinate-nucleotide--dimethylbenzimidazole phosphoribosyltransferase">
    <location>
        <begin position="1"/>
        <end position="334"/>
    </location>
</feature>
<feature type="active site" description="Proton acceptor" evidence="1">
    <location>
        <position position="303"/>
    </location>
</feature>
<sequence length="334" mass="34096">MLQLNSFAEISTLADRLPVADEAARAAALARQNSLTKPVGSLGRLEELALHWAAWRATERPTITKAQALCFAGNHGVCAQGVNVFPQEVTHLMVKNFEMGGAAINQLCRAAGADLQVISLDLDRPTQDFTQGPAMTEAETVAALNVGAGAVDVTADALIIGEMGIGNSTIAAALAAAIYGGTAKDFVGPGTGSDAAGIARKIAAIDKGLALHGGLGGMETLAALGGREIAAMCGAVLGARAARIPVILDGFISTAAVSTLFKVDPRLLDHCVVGHTSAEPGHQKVLTTMGKRALLQMEMRLGEGTGAALALGVVRAALECHNGMVTYAEAGITA</sequence>